<dbReference type="EC" id="2.3.1.286" evidence="1 2"/>
<dbReference type="EMBL" id="CP000046">
    <property type="protein sequence ID" value="AAW37065.1"/>
    <property type="molecule type" value="Genomic_DNA"/>
</dbReference>
<dbReference type="SMR" id="Q5HE07"/>
<dbReference type="KEGG" id="sac:SACOL2189"/>
<dbReference type="HOGENOM" id="CLU_023643_3_0_9"/>
<dbReference type="Proteomes" id="UP000000530">
    <property type="component" value="Chromosome"/>
</dbReference>
<dbReference type="GO" id="GO:0005737">
    <property type="term" value="C:cytoplasm"/>
    <property type="evidence" value="ECO:0007669"/>
    <property type="project" value="UniProtKB-SubCell"/>
</dbReference>
<dbReference type="GO" id="GO:0017136">
    <property type="term" value="F:histone deacetylase activity, NAD-dependent"/>
    <property type="evidence" value="ECO:0007669"/>
    <property type="project" value="TreeGrafter"/>
</dbReference>
<dbReference type="GO" id="GO:0070403">
    <property type="term" value="F:NAD+ binding"/>
    <property type="evidence" value="ECO:0007669"/>
    <property type="project" value="UniProtKB-UniRule"/>
</dbReference>
<dbReference type="GO" id="GO:0008270">
    <property type="term" value="F:zinc ion binding"/>
    <property type="evidence" value="ECO:0007669"/>
    <property type="project" value="UniProtKB-UniRule"/>
</dbReference>
<dbReference type="CDD" id="cd01411">
    <property type="entry name" value="SIR2H"/>
    <property type="match status" value="1"/>
</dbReference>
<dbReference type="Gene3D" id="3.30.1600.10">
    <property type="entry name" value="SIR2/SIRT2 'Small Domain"/>
    <property type="match status" value="1"/>
</dbReference>
<dbReference type="Gene3D" id="3.40.50.1220">
    <property type="entry name" value="TPP-binding domain"/>
    <property type="match status" value="1"/>
</dbReference>
<dbReference type="HAMAP" id="MF_01968">
    <property type="entry name" value="Sirtuin_ClassU"/>
    <property type="match status" value="1"/>
</dbReference>
<dbReference type="InterPro" id="IPR029035">
    <property type="entry name" value="DHS-like_NAD/FAD-binding_dom"/>
</dbReference>
<dbReference type="InterPro" id="IPR050134">
    <property type="entry name" value="NAD-dep_sirtuin_deacylases"/>
</dbReference>
<dbReference type="InterPro" id="IPR003000">
    <property type="entry name" value="Sirtuin"/>
</dbReference>
<dbReference type="InterPro" id="IPR026591">
    <property type="entry name" value="Sirtuin_cat_small_dom_sf"/>
</dbReference>
<dbReference type="InterPro" id="IPR028628">
    <property type="entry name" value="Sirtuin_class_U"/>
</dbReference>
<dbReference type="InterPro" id="IPR026590">
    <property type="entry name" value="Ssirtuin_cat_dom"/>
</dbReference>
<dbReference type="NCBIfam" id="NF001752">
    <property type="entry name" value="PRK00481.1-1"/>
    <property type="match status" value="1"/>
</dbReference>
<dbReference type="PANTHER" id="PTHR11085:SF4">
    <property type="entry name" value="NAD-DEPENDENT PROTEIN DEACYLASE"/>
    <property type="match status" value="1"/>
</dbReference>
<dbReference type="PANTHER" id="PTHR11085">
    <property type="entry name" value="NAD-DEPENDENT PROTEIN DEACYLASE SIRTUIN-5, MITOCHONDRIAL-RELATED"/>
    <property type="match status" value="1"/>
</dbReference>
<dbReference type="Pfam" id="PF02146">
    <property type="entry name" value="SIR2"/>
    <property type="match status" value="1"/>
</dbReference>
<dbReference type="SUPFAM" id="SSF52467">
    <property type="entry name" value="DHS-like NAD/FAD-binding domain"/>
    <property type="match status" value="1"/>
</dbReference>
<dbReference type="PROSITE" id="PS50305">
    <property type="entry name" value="SIRTUIN"/>
    <property type="match status" value="1"/>
</dbReference>
<gene>
    <name evidence="1" type="primary">cobB</name>
    <name type="ordered locus">SACOL2189</name>
</gene>
<name>NPD_STAAC</name>
<reference key="1">
    <citation type="journal article" date="2005" name="J. Bacteriol.">
        <title>Insights on evolution of virulence and resistance from the complete genome analysis of an early methicillin-resistant Staphylococcus aureus strain and a biofilm-producing methicillin-resistant Staphylococcus epidermidis strain.</title>
        <authorList>
            <person name="Gill S.R."/>
            <person name="Fouts D.E."/>
            <person name="Archer G.L."/>
            <person name="Mongodin E.F."/>
            <person name="DeBoy R.T."/>
            <person name="Ravel J."/>
            <person name="Paulsen I.T."/>
            <person name="Kolonay J.F."/>
            <person name="Brinkac L.M."/>
            <person name="Beanan M.J."/>
            <person name="Dodson R.J."/>
            <person name="Daugherty S.C."/>
            <person name="Madupu R."/>
            <person name="Angiuoli S.V."/>
            <person name="Durkin A.S."/>
            <person name="Haft D.H."/>
            <person name="Vamathevan J.J."/>
            <person name="Khouri H."/>
            <person name="Utterback T.R."/>
            <person name="Lee C."/>
            <person name="Dimitrov G."/>
            <person name="Jiang L."/>
            <person name="Qin H."/>
            <person name="Weidman J."/>
            <person name="Tran K."/>
            <person name="Kang K.H."/>
            <person name="Hance I.R."/>
            <person name="Nelson K.E."/>
            <person name="Fraser C.M."/>
        </authorList>
    </citation>
    <scope>NUCLEOTIDE SEQUENCE [LARGE SCALE GENOMIC DNA]</scope>
    <source>
        <strain>COL</strain>
    </source>
</reference>
<organism>
    <name type="scientific">Staphylococcus aureus (strain COL)</name>
    <dbReference type="NCBI Taxonomy" id="93062"/>
    <lineage>
        <taxon>Bacteria</taxon>
        <taxon>Bacillati</taxon>
        <taxon>Bacillota</taxon>
        <taxon>Bacilli</taxon>
        <taxon>Bacillales</taxon>
        <taxon>Staphylococcaceae</taxon>
        <taxon>Staphylococcus</taxon>
    </lineage>
</organism>
<comment type="function">
    <text evidence="1">NAD-dependent protein deacetylase which modulates the activities of several enzymes which are inactive in their acetylated form.</text>
</comment>
<comment type="catalytic activity">
    <reaction evidence="1">
        <text>N(6)-acetyl-L-lysyl-[protein] + NAD(+) + H2O = 2''-O-acetyl-ADP-D-ribose + nicotinamide + L-lysyl-[protein]</text>
        <dbReference type="Rhea" id="RHEA:43636"/>
        <dbReference type="Rhea" id="RHEA-COMP:9752"/>
        <dbReference type="Rhea" id="RHEA-COMP:10731"/>
        <dbReference type="ChEBI" id="CHEBI:15377"/>
        <dbReference type="ChEBI" id="CHEBI:17154"/>
        <dbReference type="ChEBI" id="CHEBI:29969"/>
        <dbReference type="ChEBI" id="CHEBI:57540"/>
        <dbReference type="ChEBI" id="CHEBI:61930"/>
        <dbReference type="ChEBI" id="CHEBI:83767"/>
        <dbReference type="EC" id="2.3.1.286"/>
    </reaction>
</comment>
<comment type="cofactor">
    <cofactor evidence="1">
        <name>Zn(2+)</name>
        <dbReference type="ChEBI" id="CHEBI:29105"/>
    </cofactor>
    <text evidence="1">Binds 1 zinc ion per subunit.</text>
</comment>
<comment type="subcellular location">
    <subcellularLocation>
        <location evidence="1">Cytoplasm</location>
    </subcellularLocation>
</comment>
<comment type="similarity">
    <text evidence="1">Belongs to the sirtuin family. Class U subfamily.</text>
</comment>
<evidence type="ECO:0000255" key="1">
    <source>
        <dbReference type="HAMAP-Rule" id="MF_01968"/>
    </source>
</evidence>
<evidence type="ECO:0000255" key="2">
    <source>
        <dbReference type="PROSITE-ProRule" id="PRU00236"/>
    </source>
</evidence>
<proteinExistence type="inferred from homology"/>
<keyword id="KW-0963">Cytoplasm</keyword>
<keyword id="KW-0479">Metal-binding</keyword>
<keyword id="KW-0520">NAD</keyword>
<keyword id="KW-0808">Transferase</keyword>
<keyword id="KW-0862">Zinc</keyword>
<protein>
    <recommendedName>
        <fullName evidence="1">NAD-dependent protein deacetylase</fullName>
        <ecNumber evidence="1 2">2.3.1.286</ecNumber>
    </recommendedName>
    <alternativeName>
        <fullName evidence="1">Regulatory protein SIR2 homolog</fullName>
    </alternativeName>
</protein>
<feature type="chain" id="PRO_0000110350" description="NAD-dependent protein deacetylase">
    <location>
        <begin position="1"/>
        <end position="243"/>
    </location>
</feature>
<feature type="domain" description="Deacetylase sirtuin-type" evidence="2">
    <location>
        <begin position="1"/>
        <end position="243"/>
    </location>
</feature>
<feature type="active site" description="Proton acceptor" evidence="2">
    <location>
        <position position="123"/>
    </location>
</feature>
<feature type="binding site" evidence="1">
    <location>
        <position position="24"/>
    </location>
    <ligand>
        <name>NAD(+)</name>
        <dbReference type="ChEBI" id="CHEBI:57540"/>
    </ligand>
</feature>
<feature type="binding site" evidence="1">
    <location>
        <position position="35"/>
    </location>
    <ligand>
        <name>NAD(+)</name>
        <dbReference type="ChEBI" id="CHEBI:57540"/>
    </ligand>
</feature>
<feature type="binding site" evidence="1">
    <location>
        <position position="35"/>
    </location>
    <ligand>
        <name>nicotinamide</name>
        <dbReference type="ChEBI" id="CHEBI:17154"/>
    </ligand>
</feature>
<feature type="binding site" evidence="1">
    <location>
        <position position="36"/>
    </location>
    <ligand>
        <name>NAD(+)</name>
        <dbReference type="ChEBI" id="CHEBI:57540"/>
    </ligand>
</feature>
<feature type="binding site" evidence="1">
    <location>
        <position position="105"/>
    </location>
    <ligand>
        <name>NAD(+)</name>
        <dbReference type="ChEBI" id="CHEBI:57540"/>
    </ligand>
</feature>
<feature type="binding site" evidence="1">
    <location>
        <position position="107"/>
    </location>
    <ligand>
        <name>NAD(+)</name>
        <dbReference type="ChEBI" id="CHEBI:57540"/>
    </ligand>
</feature>
<feature type="binding site" evidence="1">
    <location>
        <position position="107"/>
    </location>
    <ligand>
        <name>nicotinamide</name>
        <dbReference type="ChEBI" id="CHEBI:17154"/>
    </ligand>
</feature>
<feature type="binding site" evidence="1">
    <location>
        <position position="108"/>
    </location>
    <ligand>
        <name>NAD(+)</name>
        <dbReference type="ChEBI" id="CHEBI:57540"/>
    </ligand>
</feature>
<feature type="binding site" evidence="1">
    <location>
        <position position="108"/>
    </location>
    <ligand>
        <name>nicotinamide</name>
        <dbReference type="ChEBI" id="CHEBI:17154"/>
    </ligand>
</feature>
<feature type="binding site" evidence="1">
    <location>
        <position position="123"/>
    </location>
    <ligand>
        <name>NAD(+)</name>
        <dbReference type="ChEBI" id="CHEBI:57540"/>
    </ligand>
</feature>
<feature type="binding site" evidence="1">
    <location>
        <position position="131"/>
    </location>
    <ligand>
        <name>Zn(2+)</name>
        <dbReference type="ChEBI" id="CHEBI:29105"/>
    </ligand>
</feature>
<feature type="binding site" evidence="1">
    <location>
        <position position="134"/>
    </location>
    <ligand>
        <name>Zn(2+)</name>
        <dbReference type="ChEBI" id="CHEBI:29105"/>
    </ligand>
</feature>
<feature type="binding site" evidence="1">
    <location>
        <position position="151"/>
    </location>
    <ligand>
        <name>Zn(2+)</name>
        <dbReference type="ChEBI" id="CHEBI:29105"/>
    </ligand>
</feature>
<feature type="binding site" evidence="1">
    <location>
        <position position="154"/>
    </location>
    <ligand>
        <name>Zn(2+)</name>
        <dbReference type="ChEBI" id="CHEBI:29105"/>
    </ligand>
</feature>
<feature type="binding site" evidence="1">
    <location>
        <position position="192"/>
    </location>
    <ligand>
        <name>NAD(+)</name>
        <dbReference type="ChEBI" id="CHEBI:57540"/>
    </ligand>
</feature>
<feature type="binding site" evidence="1">
    <location>
        <position position="193"/>
    </location>
    <ligand>
        <name>NAD(+)</name>
        <dbReference type="ChEBI" id="CHEBI:57540"/>
    </ligand>
</feature>
<feature type="binding site" evidence="1">
    <location>
        <position position="215"/>
    </location>
    <ligand>
        <name>NAD(+)</name>
        <dbReference type="ChEBI" id="CHEBI:57540"/>
    </ligand>
</feature>
<feature type="binding site" evidence="1">
    <location>
        <position position="232"/>
    </location>
    <ligand>
        <name>NAD(+)</name>
        <dbReference type="ChEBI" id="CHEBI:57540"/>
    </ligand>
</feature>
<sequence>MKHDLETLKHIIDSSNRITFFTGAGVSVASGVPDFRSMGGLFDEISKDGLSPEYLLSRDYLEDDPEGFINFCHKRLLFVDTMPNIVHDWIAKLERNQQSLGIITQNIDGLHSDAGSQHVDELHGTLNRFYCNVCHKSYTKSDVIDRTLKHCDNCGGAIRPDIVLYGEMLDQPTIIRALNKIEHADTLVVLGSSLVVQPAAGLISHFKGDNLIIINKDRTPYDSDATLVIHDDMVSVVKSLMTE</sequence>
<accession>Q5HE07</accession>